<name>SDH5_ARATH</name>
<sequence>MGTLGRAIHTVGNRIRGTAQAQARVGSLLQGSHHIEKHLSRHRTLITVAPNASVIGDVQINKGSFISYASVSRDLQYPRAMGMGQVRRFSEDVSHMPEMEDSDVLNAFKDLMAADWAELPSAVVKDAKTAISKNTDDKAGQEALKNVFRAAEAVEEFGGILTSIKMEIDDSIGMSGEGVKPLPNDITDALRTAYQRYAEYLDSFEPEEVYLKKKVEMELGTKMIHLKMRCSGLGSEWGKVTVLGTSGLSGSYVEQRA</sequence>
<keyword id="KW-0903">Direct protein sequencing</keyword>
<keyword id="KW-0472">Membrane</keyword>
<keyword id="KW-0496">Mitochondrion</keyword>
<keyword id="KW-0999">Mitochondrion inner membrane</keyword>
<keyword id="KW-1185">Reference proteome</keyword>
<keyword id="KW-0809">Transit peptide</keyword>
<keyword id="KW-0816">Tricarboxylic acid cycle</keyword>
<gene>
    <name evidence="5" type="primary">SDH5</name>
    <name type="ordered locus">At1g47420</name>
    <name type="ORF">F16N3.26</name>
</gene>
<organism>
    <name type="scientific">Arabidopsis thaliana</name>
    <name type="common">Mouse-ear cress</name>
    <dbReference type="NCBI Taxonomy" id="3702"/>
    <lineage>
        <taxon>Eukaryota</taxon>
        <taxon>Viridiplantae</taxon>
        <taxon>Streptophyta</taxon>
        <taxon>Embryophyta</taxon>
        <taxon>Tracheophyta</taxon>
        <taxon>Spermatophyta</taxon>
        <taxon>Magnoliopsida</taxon>
        <taxon>eudicotyledons</taxon>
        <taxon>Gunneridae</taxon>
        <taxon>Pentapetalae</taxon>
        <taxon>rosids</taxon>
        <taxon>malvids</taxon>
        <taxon>Brassicales</taxon>
        <taxon>Brassicaceae</taxon>
        <taxon>Camelineae</taxon>
        <taxon>Arabidopsis</taxon>
    </lineage>
</organism>
<accession>Q9SX77</accession>
<comment type="pathway">
    <text evidence="5">Carbohydrate metabolism; tricarboxylic acid cycle.</text>
</comment>
<comment type="subunit">
    <text evidence="4">Component of complex II composed of eight subunits in plants: four classical SDH subunits SDH1, SDH2, SDH3 and SDH4 (a flavoprotein (FP), an iron-sulfur protein (IP), and a cytochrome b composed of a large and a small subunit.), as well as four subunits unknown in mitochondria from bacteria and heterotrophic eukaryotes.</text>
</comment>
<comment type="subcellular location">
    <subcellularLocation>
        <location evidence="1 3">Mitochondrion inner membrane</location>
        <topology evidence="5">Peripheral membrane protein</topology>
    </subcellularLocation>
</comment>
<dbReference type="EMBL" id="AC007519">
    <property type="protein sequence ID" value="AAD46040.1"/>
    <property type="molecule type" value="Genomic_DNA"/>
</dbReference>
<dbReference type="EMBL" id="CP002684">
    <property type="protein sequence ID" value="AEE32168.1"/>
    <property type="molecule type" value="Genomic_DNA"/>
</dbReference>
<dbReference type="EMBL" id="AF344326">
    <property type="protein sequence ID" value="AAK06877.1"/>
    <property type="molecule type" value="mRNA"/>
</dbReference>
<dbReference type="EMBL" id="AY054563">
    <property type="protein sequence ID" value="AAK96754.1"/>
    <property type="molecule type" value="mRNA"/>
</dbReference>
<dbReference type="EMBL" id="AY034947">
    <property type="protein sequence ID" value="AAK59453.1"/>
    <property type="molecule type" value="mRNA"/>
</dbReference>
<dbReference type="EMBL" id="AY062990">
    <property type="protein sequence ID" value="AAL34164.1"/>
    <property type="molecule type" value="mRNA"/>
</dbReference>
<dbReference type="EMBL" id="BT000345">
    <property type="protein sequence ID" value="AAN15664.1"/>
    <property type="molecule type" value="mRNA"/>
</dbReference>
<dbReference type="EMBL" id="AY084381">
    <property type="protein sequence ID" value="AAM60959.1"/>
    <property type="molecule type" value="mRNA"/>
</dbReference>
<dbReference type="PIR" id="H96514">
    <property type="entry name" value="H96514"/>
</dbReference>
<dbReference type="RefSeq" id="NP_564506.1">
    <property type="nucleotide sequence ID" value="NM_103636.3"/>
</dbReference>
<dbReference type="SMR" id="Q9SX77"/>
<dbReference type="BioGRID" id="26372">
    <property type="interactions" value="8"/>
</dbReference>
<dbReference type="FunCoup" id="Q9SX77">
    <property type="interactions" value="2886"/>
</dbReference>
<dbReference type="IntAct" id="Q9SX77">
    <property type="interactions" value="1"/>
</dbReference>
<dbReference type="STRING" id="3702.Q9SX77"/>
<dbReference type="iPTMnet" id="Q9SX77"/>
<dbReference type="MetOSite" id="Q9SX77"/>
<dbReference type="SwissPalm" id="Q9SX77"/>
<dbReference type="PaxDb" id="3702-AT1G47420.1"/>
<dbReference type="ProteomicsDB" id="232873"/>
<dbReference type="EnsemblPlants" id="AT1G47420.1">
    <property type="protein sequence ID" value="AT1G47420.1"/>
    <property type="gene ID" value="AT1G47420"/>
</dbReference>
<dbReference type="GeneID" id="841147"/>
<dbReference type="Gramene" id="AT1G47420.1">
    <property type="protein sequence ID" value="AT1G47420.1"/>
    <property type="gene ID" value="AT1G47420"/>
</dbReference>
<dbReference type="KEGG" id="ath:AT1G47420"/>
<dbReference type="Araport" id="AT1G47420"/>
<dbReference type="TAIR" id="AT1G47420">
    <property type="gene designation" value="SDH5"/>
</dbReference>
<dbReference type="eggNOG" id="ENOG502QQK1">
    <property type="taxonomic scope" value="Eukaryota"/>
</dbReference>
<dbReference type="HOGENOM" id="CLU_076459_0_0_1"/>
<dbReference type="InParanoid" id="Q9SX77"/>
<dbReference type="OMA" id="EIECAFK"/>
<dbReference type="OrthoDB" id="1910373at2759"/>
<dbReference type="PhylomeDB" id="Q9SX77"/>
<dbReference type="BioCyc" id="ARA:AT1G47420-MONOMER"/>
<dbReference type="BioCyc" id="MetaCyc:AT1G47420-MONOMER"/>
<dbReference type="UniPathway" id="UPA00223"/>
<dbReference type="CD-CODE" id="4299E36E">
    <property type="entry name" value="Nucleolus"/>
</dbReference>
<dbReference type="PRO" id="PR:Q9SX77"/>
<dbReference type="Proteomes" id="UP000006548">
    <property type="component" value="Chromosome 1"/>
</dbReference>
<dbReference type="ExpressionAtlas" id="Q9SX77">
    <property type="expression patterns" value="baseline and differential"/>
</dbReference>
<dbReference type="GO" id="GO:0005743">
    <property type="term" value="C:mitochondrial inner membrane"/>
    <property type="evidence" value="ECO:0007669"/>
    <property type="project" value="UniProtKB-SubCell"/>
</dbReference>
<dbReference type="GO" id="GO:0005739">
    <property type="term" value="C:mitochondrion"/>
    <property type="evidence" value="ECO:0000314"/>
    <property type="project" value="TAIR"/>
</dbReference>
<dbReference type="GO" id="GO:0005634">
    <property type="term" value="C:nucleus"/>
    <property type="evidence" value="ECO:0007005"/>
    <property type="project" value="TAIR"/>
</dbReference>
<dbReference type="GO" id="GO:0045273">
    <property type="term" value="C:respiratory chain complex II (succinate dehydrogenase)"/>
    <property type="evidence" value="ECO:0000314"/>
    <property type="project" value="UniProtKB"/>
</dbReference>
<dbReference type="GO" id="GO:0006099">
    <property type="term" value="P:tricarboxylic acid cycle"/>
    <property type="evidence" value="ECO:0007669"/>
    <property type="project" value="UniProtKB-UniPathway"/>
</dbReference>
<dbReference type="InterPro" id="IPR025397">
    <property type="entry name" value="SDH5"/>
</dbReference>
<dbReference type="PANTHER" id="PTHR36139">
    <property type="entry name" value="SUCCINATE DEHYDROGENASE SUBUNIT 5, MITOCHONDRIAL"/>
    <property type="match status" value="1"/>
</dbReference>
<dbReference type="PANTHER" id="PTHR36139:SF1">
    <property type="entry name" value="SUCCINATE DEHYDROGENASE SUBUNIT 5, MITOCHONDRIAL"/>
    <property type="match status" value="1"/>
</dbReference>
<dbReference type="Pfam" id="PF14290">
    <property type="entry name" value="SDH5_plant"/>
    <property type="match status" value="1"/>
</dbReference>
<feature type="transit peptide" description="Mitochondrion" evidence="1 2">
    <location>
        <begin position="1"/>
        <end position="89"/>
    </location>
</feature>
<feature type="chain" id="PRO_0000013632" description="Succinate dehydrogenase subunit 5, mitochondrial" evidence="1 2">
    <location>
        <begin position="90"/>
        <end position="257"/>
    </location>
</feature>
<protein>
    <recommendedName>
        <fullName evidence="5">Succinate dehydrogenase subunit 5, mitochondrial</fullName>
    </recommendedName>
</protein>
<proteinExistence type="evidence at protein level"/>
<evidence type="ECO:0000269" key="1">
    <source>
    </source>
</evidence>
<evidence type="ECO:0000269" key="2">
    <source>
    </source>
</evidence>
<evidence type="ECO:0000269" key="3">
    <source>
    </source>
</evidence>
<evidence type="ECO:0000269" key="4">
    <source>
    </source>
</evidence>
<evidence type="ECO:0000305" key="5"/>
<evidence type="ECO:0000312" key="6">
    <source>
        <dbReference type="EMBL" id="AAM60959.1"/>
    </source>
</evidence>
<reference key="1">
    <citation type="journal article" date="2000" name="Nature">
        <title>Sequence and analysis of chromosome 1 of the plant Arabidopsis thaliana.</title>
        <authorList>
            <person name="Theologis A."/>
            <person name="Ecker J.R."/>
            <person name="Palm C.J."/>
            <person name="Federspiel N.A."/>
            <person name="Kaul S."/>
            <person name="White O."/>
            <person name="Alonso J."/>
            <person name="Altafi H."/>
            <person name="Araujo R."/>
            <person name="Bowman C.L."/>
            <person name="Brooks S.Y."/>
            <person name="Buehler E."/>
            <person name="Chan A."/>
            <person name="Chao Q."/>
            <person name="Chen H."/>
            <person name="Cheuk R.F."/>
            <person name="Chin C.W."/>
            <person name="Chung M.K."/>
            <person name="Conn L."/>
            <person name="Conway A.B."/>
            <person name="Conway A.R."/>
            <person name="Creasy T.H."/>
            <person name="Dewar K."/>
            <person name="Dunn P."/>
            <person name="Etgu P."/>
            <person name="Feldblyum T.V."/>
            <person name="Feng J.-D."/>
            <person name="Fong B."/>
            <person name="Fujii C.Y."/>
            <person name="Gill J.E."/>
            <person name="Goldsmith A.D."/>
            <person name="Haas B."/>
            <person name="Hansen N.F."/>
            <person name="Hughes B."/>
            <person name="Huizar L."/>
            <person name="Hunter J.L."/>
            <person name="Jenkins J."/>
            <person name="Johnson-Hopson C."/>
            <person name="Khan S."/>
            <person name="Khaykin E."/>
            <person name="Kim C.J."/>
            <person name="Koo H.L."/>
            <person name="Kremenetskaia I."/>
            <person name="Kurtz D.B."/>
            <person name="Kwan A."/>
            <person name="Lam B."/>
            <person name="Langin-Hooper S."/>
            <person name="Lee A."/>
            <person name="Lee J.M."/>
            <person name="Lenz C.A."/>
            <person name="Li J.H."/>
            <person name="Li Y.-P."/>
            <person name="Lin X."/>
            <person name="Liu S.X."/>
            <person name="Liu Z.A."/>
            <person name="Luros J.S."/>
            <person name="Maiti R."/>
            <person name="Marziali A."/>
            <person name="Militscher J."/>
            <person name="Miranda M."/>
            <person name="Nguyen M."/>
            <person name="Nierman W.C."/>
            <person name="Osborne B.I."/>
            <person name="Pai G."/>
            <person name="Peterson J."/>
            <person name="Pham P.K."/>
            <person name="Rizzo M."/>
            <person name="Rooney T."/>
            <person name="Rowley D."/>
            <person name="Sakano H."/>
            <person name="Salzberg S.L."/>
            <person name="Schwartz J.R."/>
            <person name="Shinn P."/>
            <person name="Southwick A.M."/>
            <person name="Sun H."/>
            <person name="Tallon L.J."/>
            <person name="Tambunga G."/>
            <person name="Toriumi M.J."/>
            <person name="Town C.D."/>
            <person name="Utterback T."/>
            <person name="Van Aken S."/>
            <person name="Vaysberg M."/>
            <person name="Vysotskaia V.S."/>
            <person name="Walker M."/>
            <person name="Wu D."/>
            <person name="Yu G."/>
            <person name="Fraser C.M."/>
            <person name="Venter J.C."/>
            <person name="Davis R.W."/>
        </authorList>
    </citation>
    <scope>NUCLEOTIDE SEQUENCE [LARGE SCALE GENOMIC DNA]</scope>
    <source>
        <strain>cv. Columbia</strain>
    </source>
</reference>
<reference evidence="5 6" key="2">
    <citation type="journal article" date="2017" name="Plant J.">
        <title>Araport11: a complete reannotation of the Arabidopsis thaliana reference genome.</title>
        <authorList>
            <person name="Cheng C.Y."/>
            <person name="Krishnakumar V."/>
            <person name="Chan A.P."/>
            <person name="Thibaud-Nissen F."/>
            <person name="Schobel S."/>
            <person name="Town C.D."/>
        </authorList>
    </citation>
    <scope>GENOME REANNOTATION</scope>
    <source>
        <strain>cv. Columbia</strain>
    </source>
</reference>
<reference key="3">
    <citation type="journal article" date="2003" name="Science">
        <title>Empirical analysis of transcriptional activity in the Arabidopsis genome.</title>
        <authorList>
            <person name="Yamada K."/>
            <person name="Lim J."/>
            <person name="Dale J.M."/>
            <person name="Chen H."/>
            <person name="Shinn P."/>
            <person name="Palm C.J."/>
            <person name="Southwick A.M."/>
            <person name="Wu H.C."/>
            <person name="Kim C.J."/>
            <person name="Nguyen M."/>
            <person name="Pham P.K."/>
            <person name="Cheuk R.F."/>
            <person name="Karlin-Newmann G."/>
            <person name="Liu S.X."/>
            <person name="Lam B."/>
            <person name="Sakano H."/>
            <person name="Wu T."/>
            <person name="Yu G."/>
            <person name="Miranda M."/>
            <person name="Quach H.L."/>
            <person name="Tripp M."/>
            <person name="Chang C.H."/>
            <person name="Lee J.M."/>
            <person name="Toriumi M.J."/>
            <person name="Chan M.M."/>
            <person name="Tang C.C."/>
            <person name="Onodera C.S."/>
            <person name="Deng J.M."/>
            <person name="Akiyama K."/>
            <person name="Ansari Y."/>
            <person name="Arakawa T."/>
            <person name="Banh J."/>
            <person name="Banno F."/>
            <person name="Bowser L."/>
            <person name="Brooks S.Y."/>
            <person name="Carninci P."/>
            <person name="Chao Q."/>
            <person name="Choy N."/>
            <person name="Enju A."/>
            <person name="Goldsmith A.D."/>
            <person name="Gurjal M."/>
            <person name="Hansen N.F."/>
            <person name="Hayashizaki Y."/>
            <person name="Johnson-Hopson C."/>
            <person name="Hsuan V.W."/>
            <person name="Iida K."/>
            <person name="Karnes M."/>
            <person name="Khan S."/>
            <person name="Koesema E."/>
            <person name="Ishida J."/>
            <person name="Jiang P.X."/>
            <person name="Jones T."/>
            <person name="Kawai J."/>
            <person name="Kamiya A."/>
            <person name="Meyers C."/>
            <person name="Nakajima M."/>
            <person name="Narusaka M."/>
            <person name="Seki M."/>
            <person name="Sakurai T."/>
            <person name="Satou M."/>
            <person name="Tamse R."/>
            <person name="Vaysberg M."/>
            <person name="Wallender E.K."/>
            <person name="Wong C."/>
            <person name="Yamamura Y."/>
            <person name="Yuan S."/>
            <person name="Shinozaki K."/>
            <person name="Davis R.W."/>
            <person name="Theologis A."/>
            <person name="Ecker J.R."/>
        </authorList>
    </citation>
    <scope>NUCLEOTIDE SEQUENCE [LARGE SCALE MRNA]</scope>
    <source>
        <strain>cv. Columbia</strain>
    </source>
</reference>
<reference key="4">
    <citation type="submission" date="2002-03" db="EMBL/GenBank/DDBJ databases">
        <title>Full-length cDNA from Arabidopsis thaliana.</title>
        <authorList>
            <person name="Brover V.V."/>
            <person name="Troukhan M.E."/>
            <person name="Alexandrov N.A."/>
            <person name="Lu Y.-P."/>
            <person name="Flavell R.B."/>
            <person name="Feldmann K.A."/>
        </authorList>
    </citation>
    <scope>NUCLEOTIDE SEQUENCE [LARGE SCALE MRNA]</scope>
</reference>
<reference key="5">
    <citation type="journal article" date="2001" name="Plant Physiol.">
        <title>Proteomic approach to identify novel mitochondrial proteins in Arabidopsis.</title>
        <authorList>
            <person name="Kruft V."/>
            <person name="Eubel H."/>
            <person name="Jaensch L."/>
            <person name="Werhahn W."/>
            <person name="Braun H.-P."/>
        </authorList>
    </citation>
    <scope>PROTEIN SEQUENCE OF 90-101; 150-165 AND 240-256</scope>
    <scope>SUBCELLULAR LOCATION</scope>
    <source>
        <tissue>Leaf</tissue>
        <tissue>Stem</tissue>
    </source>
</reference>
<reference key="6">
    <citation type="journal article" date="2003" name="Plant Physiol.">
        <title>New insights into the respiratory chain of plant mitochondria. Supercomplexes and a unique composition of complex II.</title>
        <authorList>
            <person name="Eubel H."/>
            <person name="Jansch L."/>
            <person name="Braun H.P."/>
        </authorList>
    </citation>
    <scope>PROTEIN SEQUENCE OF 90-109</scope>
    <scope>IDENTIFICATION BY MASS SPECTROMETRY</scope>
</reference>
<reference key="7">
    <citation type="journal article" date="2004" name="Plant Cell">
        <title>Experimental analysis of the Arabidopsis mitochondrial proteome highlights signaling and regulatory components, provides assessment of targeting prediction programs, and indicates plant-specific mitochondrial proteins.</title>
        <authorList>
            <person name="Heazlewood J.L."/>
            <person name="Tonti-Filippini J.S."/>
            <person name="Gout A.M."/>
            <person name="Day D.A."/>
            <person name="Whelan J."/>
            <person name="Millar A.H."/>
        </authorList>
    </citation>
    <scope>IDENTIFICATION BY MASS SPECTROMETRY</scope>
    <scope>SUBCELLULAR LOCATION [LARGE SCALE ANALYSIS]</scope>
    <source>
        <strain>cv. Landsberg erecta</strain>
    </source>
</reference>
<reference key="8">
    <citation type="journal article" date="2004" name="Plant Mol. Biol.">
        <title>Mitochondrial cytochrome c oxidase and succinate dehydrogenase complexes contain plant specific subunits.</title>
        <authorList>
            <person name="Millar A.H."/>
            <person name="Eubel H."/>
            <person name="Jansch L."/>
            <person name="Kruft V."/>
            <person name="Heazlewood J.L."/>
            <person name="Braun H.P."/>
        </authorList>
    </citation>
    <scope>IDENTIFICATION BY MASS SPECTROMETRY</scope>
    <scope>SUBUNIT</scope>
</reference>